<name>ILVD_GEODF</name>
<feature type="chain" id="PRO_1000190666" description="Dihydroxy-acid dehydratase">
    <location>
        <begin position="1"/>
        <end position="553"/>
    </location>
</feature>
<feature type="active site" description="Proton acceptor" evidence="1">
    <location>
        <position position="467"/>
    </location>
</feature>
<feature type="binding site" evidence="1">
    <location>
        <position position="78"/>
    </location>
    <ligand>
        <name>Mg(2+)</name>
        <dbReference type="ChEBI" id="CHEBI:18420"/>
    </ligand>
</feature>
<feature type="binding site" evidence="1">
    <location>
        <position position="119"/>
    </location>
    <ligand>
        <name>[2Fe-2S] cluster</name>
        <dbReference type="ChEBI" id="CHEBI:190135"/>
    </ligand>
</feature>
<feature type="binding site" evidence="1">
    <location>
        <position position="120"/>
    </location>
    <ligand>
        <name>Mg(2+)</name>
        <dbReference type="ChEBI" id="CHEBI:18420"/>
    </ligand>
</feature>
<feature type="binding site" description="via carbamate group" evidence="1">
    <location>
        <position position="121"/>
    </location>
    <ligand>
        <name>Mg(2+)</name>
        <dbReference type="ChEBI" id="CHEBI:18420"/>
    </ligand>
</feature>
<feature type="binding site" evidence="1">
    <location>
        <position position="193"/>
    </location>
    <ligand>
        <name>[2Fe-2S] cluster</name>
        <dbReference type="ChEBI" id="CHEBI:190135"/>
    </ligand>
</feature>
<feature type="binding site" evidence="1">
    <location>
        <position position="441"/>
    </location>
    <ligand>
        <name>Mg(2+)</name>
        <dbReference type="ChEBI" id="CHEBI:18420"/>
    </ligand>
</feature>
<feature type="modified residue" description="N6-carboxylysine" evidence="1">
    <location>
        <position position="121"/>
    </location>
</feature>
<reference key="1">
    <citation type="submission" date="2009-01" db="EMBL/GenBank/DDBJ databases">
        <title>Complete sequence of Geobacter sp. FRC-32.</title>
        <authorList>
            <consortium name="US DOE Joint Genome Institute"/>
            <person name="Lucas S."/>
            <person name="Copeland A."/>
            <person name="Lapidus A."/>
            <person name="Glavina del Rio T."/>
            <person name="Dalin E."/>
            <person name="Tice H."/>
            <person name="Bruce D."/>
            <person name="Goodwin L."/>
            <person name="Pitluck S."/>
            <person name="Saunders E."/>
            <person name="Brettin T."/>
            <person name="Detter J.C."/>
            <person name="Han C."/>
            <person name="Larimer F."/>
            <person name="Land M."/>
            <person name="Hauser L."/>
            <person name="Kyrpides N."/>
            <person name="Ovchinnikova G."/>
            <person name="Kostka J."/>
            <person name="Richardson P."/>
        </authorList>
    </citation>
    <scope>NUCLEOTIDE SEQUENCE [LARGE SCALE GENOMIC DNA]</scope>
    <source>
        <strain>DSM 22248 / JCM 15807 / FRC-32</strain>
    </source>
</reference>
<protein>
    <recommendedName>
        <fullName evidence="1">Dihydroxy-acid dehydratase</fullName>
        <shortName evidence="1">DAD</shortName>
        <ecNumber evidence="1">4.2.1.9</ecNumber>
    </recommendedName>
</protein>
<proteinExistence type="inferred from homology"/>
<gene>
    <name evidence="1" type="primary">ilvD</name>
    <name type="ordered locus">Geob_1510</name>
</gene>
<comment type="function">
    <text evidence="1">Functions in the biosynthesis of branched-chain amino acids. Catalyzes the dehydration of (2R,3R)-2,3-dihydroxy-3-methylpentanoate (2,3-dihydroxy-3-methylvalerate) into 2-oxo-3-methylpentanoate (2-oxo-3-methylvalerate) and of (2R)-2,3-dihydroxy-3-methylbutanoate (2,3-dihydroxyisovalerate) into 2-oxo-3-methylbutanoate (2-oxoisovalerate), the penultimate precursor to L-isoleucine and L-valine, respectively.</text>
</comment>
<comment type="catalytic activity">
    <reaction evidence="1">
        <text>(2R)-2,3-dihydroxy-3-methylbutanoate = 3-methyl-2-oxobutanoate + H2O</text>
        <dbReference type="Rhea" id="RHEA:24809"/>
        <dbReference type="ChEBI" id="CHEBI:11851"/>
        <dbReference type="ChEBI" id="CHEBI:15377"/>
        <dbReference type="ChEBI" id="CHEBI:49072"/>
        <dbReference type="EC" id="4.2.1.9"/>
    </reaction>
    <physiologicalReaction direction="left-to-right" evidence="1">
        <dbReference type="Rhea" id="RHEA:24810"/>
    </physiologicalReaction>
</comment>
<comment type="catalytic activity">
    <reaction evidence="1">
        <text>(2R,3R)-2,3-dihydroxy-3-methylpentanoate = (S)-3-methyl-2-oxopentanoate + H2O</text>
        <dbReference type="Rhea" id="RHEA:27694"/>
        <dbReference type="ChEBI" id="CHEBI:15377"/>
        <dbReference type="ChEBI" id="CHEBI:35146"/>
        <dbReference type="ChEBI" id="CHEBI:49258"/>
        <dbReference type="EC" id="4.2.1.9"/>
    </reaction>
    <physiologicalReaction direction="left-to-right" evidence="1">
        <dbReference type="Rhea" id="RHEA:27695"/>
    </physiologicalReaction>
</comment>
<comment type="cofactor">
    <cofactor evidence="1">
        <name>[2Fe-2S] cluster</name>
        <dbReference type="ChEBI" id="CHEBI:190135"/>
    </cofactor>
    <text evidence="1">Binds 1 [2Fe-2S] cluster per subunit. This cluster acts as a Lewis acid cofactor.</text>
</comment>
<comment type="cofactor">
    <cofactor evidence="1">
        <name>Mg(2+)</name>
        <dbReference type="ChEBI" id="CHEBI:18420"/>
    </cofactor>
</comment>
<comment type="pathway">
    <text evidence="1">Amino-acid biosynthesis; L-isoleucine biosynthesis; L-isoleucine from 2-oxobutanoate: step 3/4.</text>
</comment>
<comment type="pathway">
    <text evidence="1">Amino-acid biosynthesis; L-valine biosynthesis; L-valine from pyruvate: step 3/4.</text>
</comment>
<comment type="subunit">
    <text evidence="1">Homodimer.</text>
</comment>
<comment type="similarity">
    <text evidence="1">Belongs to the IlvD/Edd family.</text>
</comment>
<dbReference type="EC" id="4.2.1.9" evidence="1"/>
<dbReference type="EMBL" id="CP001390">
    <property type="protein sequence ID" value="ACM19869.1"/>
    <property type="molecule type" value="Genomic_DNA"/>
</dbReference>
<dbReference type="RefSeq" id="WP_012646598.1">
    <property type="nucleotide sequence ID" value="NC_011979.1"/>
</dbReference>
<dbReference type="SMR" id="B9M5B4"/>
<dbReference type="STRING" id="316067.Geob_1510"/>
<dbReference type="KEGG" id="geo:Geob_1510"/>
<dbReference type="eggNOG" id="COG0129">
    <property type="taxonomic scope" value="Bacteria"/>
</dbReference>
<dbReference type="HOGENOM" id="CLU_014271_4_2_7"/>
<dbReference type="OrthoDB" id="9807077at2"/>
<dbReference type="UniPathway" id="UPA00047">
    <property type="reaction ID" value="UER00057"/>
</dbReference>
<dbReference type="UniPathway" id="UPA00049">
    <property type="reaction ID" value="UER00061"/>
</dbReference>
<dbReference type="Proteomes" id="UP000007721">
    <property type="component" value="Chromosome"/>
</dbReference>
<dbReference type="GO" id="GO:0005829">
    <property type="term" value="C:cytosol"/>
    <property type="evidence" value="ECO:0007669"/>
    <property type="project" value="TreeGrafter"/>
</dbReference>
<dbReference type="GO" id="GO:0051537">
    <property type="term" value="F:2 iron, 2 sulfur cluster binding"/>
    <property type="evidence" value="ECO:0007669"/>
    <property type="project" value="UniProtKB-UniRule"/>
</dbReference>
<dbReference type="GO" id="GO:0004160">
    <property type="term" value="F:dihydroxy-acid dehydratase activity"/>
    <property type="evidence" value="ECO:0007669"/>
    <property type="project" value="UniProtKB-UniRule"/>
</dbReference>
<dbReference type="GO" id="GO:0000287">
    <property type="term" value="F:magnesium ion binding"/>
    <property type="evidence" value="ECO:0007669"/>
    <property type="project" value="UniProtKB-UniRule"/>
</dbReference>
<dbReference type="GO" id="GO:0009097">
    <property type="term" value="P:isoleucine biosynthetic process"/>
    <property type="evidence" value="ECO:0007669"/>
    <property type="project" value="UniProtKB-UniRule"/>
</dbReference>
<dbReference type="GO" id="GO:0009099">
    <property type="term" value="P:L-valine biosynthetic process"/>
    <property type="evidence" value="ECO:0007669"/>
    <property type="project" value="UniProtKB-UniRule"/>
</dbReference>
<dbReference type="FunFam" id="3.50.30.80:FF:000001">
    <property type="entry name" value="Dihydroxy-acid dehydratase"/>
    <property type="match status" value="1"/>
</dbReference>
<dbReference type="Gene3D" id="3.50.30.80">
    <property type="entry name" value="IlvD/EDD C-terminal domain-like"/>
    <property type="match status" value="1"/>
</dbReference>
<dbReference type="HAMAP" id="MF_00012">
    <property type="entry name" value="IlvD"/>
    <property type="match status" value="1"/>
</dbReference>
<dbReference type="InterPro" id="IPR042096">
    <property type="entry name" value="Dihydro-acid_dehy_C"/>
</dbReference>
<dbReference type="InterPro" id="IPR004404">
    <property type="entry name" value="DihydroxyA_deHydtase"/>
</dbReference>
<dbReference type="InterPro" id="IPR020558">
    <property type="entry name" value="DiOHA_6PGluconate_deHydtase_CS"/>
</dbReference>
<dbReference type="InterPro" id="IPR056740">
    <property type="entry name" value="ILV_EDD_C"/>
</dbReference>
<dbReference type="InterPro" id="IPR000581">
    <property type="entry name" value="ILV_EDD_N"/>
</dbReference>
<dbReference type="InterPro" id="IPR037237">
    <property type="entry name" value="IlvD/EDD_N"/>
</dbReference>
<dbReference type="NCBIfam" id="TIGR00110">
    <property type="entry name" value="ilvD"/>
    <property type="match status" value="1"/>
</dbReference>
<dbReference type="NCBIfam" id="NF002068">
    <property type="entry name" value="PRK00911.1"/>
    <property type="match status" value="1"/>
</dbReference>
<dbReference type="PANTHER" id="PTHR43661">
    <property type="entry name" value="D-XYLONATE DEHYDRATASE"/>
    <property type="match status" value="1"/>
</dbReference>
<dbReference type="PANTHER" id="PTHR43661:SF3">
    <property type="entry name" value="D-XYLONATE DEHYDRATASE YAGF-RELATED"/>
    <property type="match status" value="1"/>
</dbReference>
<dbReference type="Pfam" id="PF24877">
    <property type="entry name" value="ILV_EDD_C"/>
    <property type="match status" value="1"/>
</dbReference>
<dbReference type="Pfam" id="PF00920">
    <property type="entry name" value="ILVD_EDD_N"/>
    <property type="match status" value="1"/>
</dbReference>
<dbReference type="SUPFAM" id="SSF143975">
    <property type="entry name" value="IlvD/EDD N-terminal domain-like"/>
    <property type="match status" value="1"/>
</dbReference>
<dbReference type="SUPFAM" id="SSF52016">
    <property type="entry name" value="LeuD/IlvD-like"/>
    <property type="match status" value="1"/>
</dbReference>
<dbReference type="PROSITE" id="PS00886">
    <property type="entry name" value="ILVD_EDD_1"/>
    <property type="match status" value="1"/>
</dbReference>
<dbReference type="PROSITE" id="PS00887">
    <property type="entry name" value="ILVD_EDD_2"/>
    <property type="match status" value="1"/>
</dbReference>
<evidence type="ECO:0000255" key="1">
    <source>
        <dbReference type="HAMAP-Rule" id="MF_00012"/>
    </source>
</evidence>
<sequence length="553" mass="58444">MRSDMIKKGLERTPHRALLKGTGVPQSQMEKPFIGVATSFTDLIPGHVGMRDLERYIEKGIHSGGGYAFFFGIPGVCDGISMGHKGMHYSLPTRELIADMVESVAEAHRLDGLVLLTNCDKITPGMLMAAARLDIPCIVVTAGPMMSGRGEAGRKYSFVTDTFEAMARYKAGVIDAQELQVCEDNACPGMGSCQGLFTANTMAILTETLGMSLPRCGTALAVSALKRRIAFASGERIVDLVKDNVTPRSILTRAAFENAIRVDLALGGSSNTVLHLLAIAHEAEVELPLETFDILAKETPQLASMNPAGEHFMEDLDTAGGVAGVLMQLGDKIKDNPTVMGLTIKQLAASIANVDETVIRPLSNPVKKEGGIAILSGNIAPKGAVVKQSGVSAAMMNFTGTARCFDSEEAAMAAIMEGKIVAGDCVVIRYEGPKGGPGMREMLAPTAAIMGLGLGDSVALITDGRFSGGTRGPCIGHISPEAAEGGPIALVEEGDRIELDIPGRRLQLLVDDETLAKRRRNWQAPAPKIRTGWLARYAKVVTSANTGAVTSAD</sequence>
<accession>B9M5B4</accession>
<organism>
    <name type="scientific">Geotalea daltonii (strain DSM 22248 / JCM 15807 / FRC-32)</name>
    <name type="common">Geobacter daltonii</name>
    <dbReference type="NCBI Taxonomy" id="316067"/>
    <lineage>
        <taxon>Bacteria</taxon>
        <taxon>Pseudomonadati</taxon>
        <taxon>Thermodesulfobacteriota</taxon>
        <taxon>Desulfuromonadia</taxon>
        <taxon>Geobacterales</taxon>
        <taxon>Geobacteraceae</taxon>
        <taxon>Geotalea</taxon>
    </lineage>
</organism>
<keyword id="KW-0001">2Fe-2S</keyword>
<keyword id="KW-0028">Amino-acid biosynthesis</keyword>
<keyword id="KW-0100">Branched-chain amino acid biosynthesis</keyword>
<keyword id="KW-0408">Iron</keyword>
<keyword id="KW-0411">Iron-sulfur</keyword>
<keyword id="KW-0456">Lyase</keyword>
<keyword id="KW-0460">Magnesium</keyword>
<keyword id="KW-0479">Metal-binding</keyword>
<keyword id="KW-1185">Reference proteome</keyword>